<keyword id="KW-0227">DNA damage</keyword>
<keyword id="KW-0233">DNA recombination</keyword>
<keyword id="KW-0234">DNA repair</keyword>
<organism>
    <name type="scientific">Limosilactobacillus reuteri subsp. reuteri (strain JCM 1112)</name>
    <name type="common">Lactobacillus reuteri</name>
    <dbReference type="NCBI Taxonomy" id="557433"/>
    <lineage>
        <taxon>Bacteria</taxon>
        <taxon>Bacillati</taxon>
        <taxon>Bacillota</taxon>
        <taxon>Bacilli</taxon>
        <taxon>Lactobacillales</taxon>
        <taxon>Lactobacillaceae</taxon>
        <taxon>Limosilactobacillus</taxon>
    </lineage>
</organism>
<comment type="function">
    <text evidence="1">Involved in DNA repair and RecF pathway recombination.</text>
</comment>
<comment type="similarity">
    <text evidence="1">Belongs to the RecO family.</text>
</comment>
<dbReference type="EMBL" id="AP007281">
    <property type="protein sequence ID" value="BAG25226.1"/>
    <property type="molecule type" value="Genomic_DNA"/>
</dbReference>
<dbReference type="RefSeq" id="WP_003668128.1">
    <property type="nucleotide sequence ID" value="NC_010609.1"/>
</dbReference>
<dbReference type="SMR" id="B2G6Z4"/>
<dbReference type="KEGG" id="lrf:LAR_0710"/>
<dbReference type="HOGENOM" id="CLU_066632_4_0_9"/>
<dbReference type="GO" id="GO:0043590">
    <property type="term" value="C:bacterial nucleoid"/>
    <property type="evidence" value="ECO:0007669"/>
    <property type="project" value="TreeGrafter"/>
</dbReference>
<dbReference type="GO" id="GO:0006310">
    <property type="term" value="P:DNA recombination"/>
    <property type="evidence" value="ECO:0007669"/>
    <property type="project" value="UniProtKB-UniRule"/>
</dbReference>
<dbReference type="GO" id="GO:0006302">
    <property type="term" value="P:double-strand break repair"/>
    <property type="evidence" value="ECO:0007669"/>
    <property type="project" value="TreeGrafter"/>
</dbReference>
<dbReference type="Gene3D" id="2.40.50.140">
    <property type="entry name" value="Nucleic acid-binding proteins"/>
    <property type="match status" value="1"/>
</dbReference>
<dbReference type="Gene3D" id="1.20.1440.120">
    <property type="entry name" value="Recombination protein O, C-terminal domain"/>
    <property type="match status" value="1"/>
</dbReference>
<dbReference type="HAMAP" id="MF_00201">
    <property type="entry name" value="RecO"/>
    <property type="match status" value="1"/>
</dbReference>
<dbReference type="InterPro" id="IPR037278">
    <property type="entry name" value="ARFGAP/RecO"/>
</dbReference>
<dbReference type="InterPro" id="IPR022572">
    <property type="entry name" value="DNA_rep/recomb_RecO_N"/>
</dbReference>
<dbReference type="InterPro" id="IPR012340">
    <property type="entry name" value="NA-bd_OB-fold"/>
</dbReference>
<dbReference type="InterPro" id="IPR003717">
    <property type="entry name" value="RecO"/>
</dbReference>
<dbReference type="InterPro" id="IPR042242">
    <property type="entry name" value="RecO_C"/>
</dbReference>
<dbReference type="NCBIfam" id="TIGR00613">
    <property type="entry name" value="reco"/>
    <property type="match status" value="1"/>
</dbReference>
<dbReference type="PANTHER" id="PTHR33991">
    <property type="entry name" value="DNA REPAIR PROTEIN RECO"/>
    <property type="match status" value="1"/>
</dbReference>
<dbReference type="PANTHER" id="PTHR33991:SF1">
    <property type="entry name" value="DNA REPAIR PROTEIN RECO"/>
    <property type="match status" value="1"/>
</dbReference>
<dbReference type="Pfam" id="PF02565">
    <property type="entry name" value="RecO_C"/>
    <property type="match status" value="1"/>
</dbReference>
<dbReference type="Pfam" id="PF11967">
    <property type="entry name" value="RecO_N"/>
    <property type="match status" value="1"/>
</dbReference>
<dbReference type="SUPFAM" id="SSF57863">
    <property type="entry name" value="ArfGap/RecO-like zinc finger"/>
    <property type="match status" value="1"/>
</dbReference>
<dbReference type="SUPFAM" id="SSF50249">
    <property type="entry name" value="Nucleic acid-binding proteins"/>
    <property type="match status" value="1"/>
</dbReference>
<evidence type="ECO:0000255" key="1">
    <source>
        <dbReference type="HAMAP-Rule" id="MF_00201"/>
    </source>
</evidence>
<name>RECO_LIMRJ</name>
<feature type="chain" id="PRO_1000099387" description="DNA repair protein RecO">
    <location>
        <begin position="1"/>
        <end position="261"/>
    </location>
</feature>
<gene>
    <name evidence="1" type="primary">recO</name>
    <name type="ordered locus">LAR_0710</name>
</gene>
<reference key="1">
    <citation type="journal article" date="2008" name="DNA Res.">
        <title>Comparative genome analysis of Lactobacillus reuteri and Lactobacillus fermentum reveal a genomic island for reuterin and cobalamin production.</title>
        <authorList>
            <person name="Morita H."/>
            <person name="Toh H."/>
            <person name="Fukuda S."/>
            <person name="Horikawa H."/>
            <person name="Oshima K."/>
            <person name="Suzuki T."/>
            <person name="Murakami M."/>
            <person name="Hisamatsu S."/>
            <person name="Kato Y."/>
            <person name="Takizawa T."/>
            <person name="Fukuoka H."/>
            <person name="Yoshimura T."/>
            <person name="Itoh K."/>
            <person name="O'Sullivan D.J."/>
            <person name="McKay L.L."/>
            <person name="Ohno H."/>
            <person name="Kikuchi J."/>
            <person name="Masaoka T."/>
            <person name="Hattori M."/>
        </authorList>
    </citation>
    <scope>NUCLEOTIDE SEQUENCE [LARGE SCALE GENOMIC DNA]</scope>
    <source>
        <strain>JCM 1112</strain>
    </source>
</reference>
<sequence>MARVTTQFTGIIMYRQDYRERDLLVKMLTDKIGPAMFFVKNAKKRGFRMTADILPFTHGTYIGSLDENGLSFINTASDTSQYKKIASDISKNAYVTYILALVDSAFNDGRSIGGWFKQVAAALDLIEKGLDEQIITNVIETQLLVAFGVAPVWDRCVVCGRNDLALDFSEQYGGMLCQNHWSLDEHRLYLDRKTAYYLQQFATINLQKLNSIRINPATKRRLQQVLDTLYDNEVGLNLKAKRFIKQMNKWEQNIGKLSMND</sequence>
<protein>
    <recommendedName>
        <fullName evidence="1">DNA repair protein RecO</fullName>
    </recommendedName>
    <alternativeName>
        <fullName evidence="1">Recombination protein O</fullName>
    </alternativeName>
</protein>
<proteinExistence type="inferred from homology"/>
<accession>B2G6Z4</accession>